<feature type="chain" id="PRO_0000134816" description="6,7-dimethyl-8-ribityllumazine synthase">
    <location>
        <begin position="1"/>
        <end position="161"/>
    </location>
</feature>
<feature type="active site" description="Proton donor" evidence="1">
    <location>
        <position position="89"/>
    </location>
</feature>
<feature type="binding site" evidence="1">
    <location>
        <position position="26"/>
    </location>
    <ligand>
        <name>5-amino-6-(D-ribitylamino)uracil</name>
        <dbReference type="ChEBI" id="CHEBI:15934"/>
    </ligand>
</feature>
<feature type="binding site" evidence="1">
    <location>
        <begin position="58"/>
        <end position="60"/>
    </location>
    <ligand>
        <name>5-amino-6-(D-ribitylamino)uracil</name>
        <dbReference type="ChEBI" id="CHEBI:15934"/>
    </ligand>
</feature>
<feature type="binding site" evidence="1">
    <location>
        <begin position="81"/>
        <end position="83"/>
    </location>
    <ligand>
        <name>5-amino-6-(D-ribitylamino)uracil</name>
        <dbReference type="ChEBI" id="CHEBI:15934"/>
    </ligand>
</feature>
<feature type="binding site" evidence="1">
    <location>
        <begin position="86"/>
        <end position="87"/>
    </location>
    <ligand>
        <name>(2S)-2-hydroxy-3-oxobutyl phosphate</name>
        <dbReference type="ChEBI" id="CHEBI:58830"/>
    </ligand>
</feature>
<feature type="binding site" evidence="1">
    <location>
        <position position="114"/>
    </location>
    <ligand>
        <name>5-amino-6-(D-ribitylamino)uracil</name>
        <dbReference type="ChEBI" id="CHEBI:15934"/>
    </ligand>
</feature>
<feature type="binding site" evidence="1">
    <location>
        <position position="128"/>
    </location>
    <ligand>
        <name>(2S)-2-hydroxy-3-oxobutyl phosphate</name>
        <dbReference type="ChEBI" id="CHEBI:58830"/>
    </ligand>
</feature>
<comment type="function">
    <text evidence="1">Catalyzes the formation of 6,7-dimethyl-8-ribityllumazine by condensation of 5-amino-6-(D-ribitylamino)uracil with 3,4-dihydroxy-2-butanone 4-phosphate. This is the penultimate step in the biosynthesis of riboflavin.</text>
</comment>
<comment type="catalytic activity">
    <reaction evidence="1">
        <text>(2S)-2-hydroxy-3-oxobutyl phosphate + 5-amino-6-(D-ribitylamino)uracil = 6,7-dimethyl-8-(1-D-ribityl)lumazine + phosphate + 2 H2O + H(+)</text>
        <dbReference type="Rhea" id="RHEA:26152"/>
        <dbReference type="ChEBI" id="CHEBI:15377"/>
        <dbReference type="ChEBI" id="CHEBI:15378"/>
        <dbReference type="ChEBI" id="CHEBI:15934"/>
        <dbReference type="ChEBI" id="CHEBI:43474"/>
        <dbReference type="ChEBI" id="CHEBI:58201"/>
        <dbReference type="ChEBI" id="CHEBI:58830"/>
        <dbReference type="EC" id="2.5.1.78"/>
    </reaction>
</comment>
<comment type="pathway">
    <text evidence="1">Cofactor biosynthesis; riboflavin biosynthesis; riboflavin from 2-hydroxy-3-oxobutyl phosphate and 5-amino-6-(D-ribitylamino)uracil: step 1/2.</text>
</comment>
<comment type="similarity">
    <text evidence="1">Belongs to the DMRL synthase family.</text>
</comment>
<reference key="1">
    <citation type="journal article" date="2002" name="Nature">
        <title>Complete genome sequence of the model actinomycete Streptomyces coelicolor A3(2).</title>
        <authorList>
            <person name="Bentley S.D."/>
            <person name="Chater K.F."/>
            <person name="Cerdeno-Tarraga A.-M."/>
            <person name="Challis G.L."/>
            <person name="Thomson N.R."/>
            <person name="James K.D."/>
            <person name="Harris D.E."/>
            <person name="Quail M.A."/>
            <person name="Kieser H."/>
            <person name="Harper D."/>
            <person name="Bateman A."/>
            <person name="Brown S."/>
            <person name="Chandra G."/>
            <person name="Chen C.W."/>
            <person name="Collins M."/>
            <person name="Cronin A."/>
            <person name="Fraser A."/>
            <person name="Goble A."/>
            <person name="Hidalgo J."/>
            <person name="Hornsby T."/>
            <person name="Howarth S."/>
            <person name="Huang C.-H."/>
            <person name="Kieser T."/>
            <person name="Larke L."/>
            <person name="Murphy L.D."/>
            <person name="Oliver K."/>
            <person name="O'Neil S."/>
            <person name="Rabbinowitsch E."/>
            <person name="Rajandream M.A."/>
            <person name="Rutherford K.M."/>
            <person name="Rutter S."/>
            <person name="Seeger K."/>
            <person name="Saunders D."/>
            <person name="Sharp S."/>
            <person name="Squares R."/>
            <person name="Squares S."/>
            <person name="Taylor K."/>
            <person name="Warren T."/>
            <person name="Wietzorrek A."/>
            <person name="Woodward J.R."/>
            <person name="Barrell B.G."/>
            <person name="Parkhill J."/>
            <person name="Hopwood D.A."/>
        </authorList>
    </citation>
    <scope>NUCLEOTIDE SEQUENCE [LARGE SCALE GENOMIC DNA]</scope>
    <source>
        <strain>ATCC BAA-471 / A3(2) / M145</strain>
    </source>
</reference>
<gene>
    <name evidence="1" type="primary">ribH</name>
    <name type="ordered locus">SCO1440</name>
    <name type="ORF">SC6D7A.03c</name>
</gene>
<protein>
    <recommendedName>
        <fullName evidence="1">6,7-dimethyl-8-ribityllumazine synthase</fullName>
        <shortName evidence="1">DMRL synthase</shortName>
        <shortName evidence="1">LS</shortName>
        <shortName evidence="1">Lumazine synthase</shortName>
        <ecNumber evidence="1">2.5.1.78</ecNumber>
    </recommendedName>
</protein>
<proteinExistence type="inferred from homology"/>
<dbReference type="EC" id="2.5.1.78" evidence="1"/>
<dbReference type="EMBL" id="AL939108">
    <property type="protein sequence ID" value="CAC17558.1"/>
    <property type="molecule type" value="Genomic_DNA"/>
</dbReference>
<dbReference type="RefSeq" id="NP_625721.1">
    <property type="nucleotide sequence ID" value="NC_003888.3"/>
</dbReference>
<dbReference type="RefSeq" id="WP_003977385.1">
    <property type="nucleotide sequence ID" value="NZ_VNID01000029.1"/>
</dbReference>
<dbReference type="SMR" id="Q9EWJ9"/>
<dbReference type="FunCoup" id="Q9EWJ9">
    <property type="interactions" value="411"/>
</dbReference>
<dbReference type="STRING" id="100226.gene:17759026"/>
<dbReference type="PaxDb" id="100226-SCO1440"/>
<dbReference type="GeneID" id="91387591"/>
<dbReference type="KEGG" id="sco:SCO1440"/>
<dbReference type="PATRIC" id="fig|100226.15.peg.1450"/>
<dbReference type="eggNOG" id="COG0054">
    <property type="taxonomic scope" value="Bacteria"/>
</dbReference>
<dbReference type="HOGENOM" id="CLU_089358_1_2_11"/>
<dbReference type="InParanoid" id="Q9EWJ9"/>
<dbReference type="OrthoDB" id="9809709at2"/>
<dbReference type="PhylomeDB" id="Q9EWJ9"/>
<dbReference type="BRENDA" id="2.5.1.78">
    <property type="organism ID" value="5998"/>
</dbReference>
<dbReference type="UniPathway" id="UPA00275">
    <property type="reaction ID" value="UER00404"/>
</dbReference>
<dbReference type="Proteomes" id="UP000001973">
    <property type="component" value="Chromosome"/>
</dbReference>
<dbReference type="GO" id="GO:0005737">
    <property type="term" value="C:cytoplasm"/>
    <property type="evidence" value="ECO:0000318"/>
    <property type="project" value="GO_Central"/>
</dbReference>
<dbReference type="GO" id="GO:0005829">
    <property type="term" value="C:cytosol"/>
    <property type="evidence" value="ECO:0000318"/>
    <property type="project" value="GO_Central"/>
</dbReference>
<dbReference type="GO" id="GO:0009349">
    <property type="term" value="C:riboflavin synthase complex"/>
    <property type="evidence" value="ECO:0007669"/>
    <property type="project" value="InterPro"/>
</dbReference>
<dbReference type="GO" id="GO:0000906">
    <property type="term" value="F:6,7-dimethyl-8-ribityllumazine synthase activity"/>
    <property type="evidence" value="ECO:0000318"/>
    <property type="project" value="GO_Central"/>
</dbReference>
<dbReference type="GO" id="GO:0009231">
    <property type="term" value="P:riboflavin biosynthetic process"/>
    <property type="evidence" value="ECO:0000318"/>
    <property type="project" value="GO_Central"/>
</dbReference>
<dbReference type="CDD" id="cd09209">
    <property type="entry name" value="Lumazine_synthase-I"/>
    <property type="match status" value="1"/>
</dbReference>
<dbReference type="FunFam" id="3.40.50.960:FF:000002">
    <property type="entry name" value="6,7-dimethyl-8-ribityllumazine synthase"/>
    <property type="match status" value="1"/>
</dbReference>
<dbReference type="Gene3D" id="3.40.50.960">
    <property type="entry name" value="Lumazine/riboflavin synthase"/>
    <property type="match status" value="1"/>
</dbReference>
<dbReference type="HAMAP" id="MF_00178">
    <property type="entry name" value="Lumazine_synth"/>
    <property type="match status" value="1"/>
</dbReference>
<dbReference type="InterPro" id="IPR034964">
    <property type="entry name" value="LS"/>
</dbReference>
<dbReference type="InterPro" id="IPR002180">
    <property type="entry name" value="LS/RS"/>
</dbReference>
<dbReference type="InterPro" id="IPR036467">
    <property type="entry name" value="LS/RS_sf"/>
</dbReference>
<dbReference type="NCBIfam" id="TIGR00114">
    <property type="entry name" value="lumazine-synth"/>
    <property type="match status" value="1"/>
</dbReference>
<dbReference type="PANTHER" id="PTHR21058:SF0">
    <property type="entry name" value="6,7-DIMETHYL-8-RIBITYLLUMAZINE SYNTHASE"/>
    <property type="match status" value="1"/>
</dbReference>
<dbReference type="PANTHER" id="PTHR21058">
    <property type="entry name" value="6,7-DIMETHYL-8-RIBITYLLUMAZINE SYNTHASE DMRL SYNTHASE LUMAZINE SYNTHASE"/>
    <property type="match status" value="1"/>
</dbReference>
<dbReference type="Pfam" id="PF00885">
    <property type="entry name" value="DMRL_synthase"/>
    <property type="match status" value="1"/>
</dbReference>
<dbReference type="SUPFAM" id="SSF52121">
    <property type="entry name" value="Lumazine synthase"/>
    <property type="match status" value="1"/>
</dbReference>
<evidence type="ECO:0000255" key="1">
    <source>
        <dbReference type="HAMAP-Rule" id="MF_00178"/>
    </source>
</evidence>
<sequence length="161" mass="16785">MSGKGAPELSVRNVGDLRVAVIASQWHDKVMDGLVDGALRALHELGIDEPTLLRVPGSFELPVVAKVLAGRGYDAIVALGVVIRGGTPHFDYVCQGVTQGLVQVSVETGVPVGFGVLTCDTEEQALDRAGIEGSSEDKGHEAVTAAVATAATLRSVSEPWR</sequence>
<organism>
    <name type="scientific">Streptomyces coelicolor (strain ATCC BAA-471 / A3(2) / M145)</name>
    <dbReference type="NCBI Taxonomy" id="100226"/>
    <lineage>
        <taxon>Bacteria</taxon>
        <taxon>Bacillati</taxon>
        <taxon>Actinomycetota</taxon>
        <taxon>Actinomycetes</taxon>
        <taxon>Kitasatosporales</taxon>
        <taxon>Streptomycetaceae</taxon>
        <taxon>Streptomyces</taxon>
        <taxon>Streptomyces albidoflavus group</taxon>
    </lineage>
</organism>
<keyword id="KW-1185">Reference proteome</keyword>
<keyword id="KW-0686">Riboflavin biosynthesis</keyword>
<keyword id="KW-0808">Transferase</keyword>
<name>RISB_STRCO</name>
<accession>Q9EWJ9</accession>